<feature type="transit peptide" description="Mitochondrion" evidence="1">
    <location>
        <begin position="1"/>
        <end position="38"/>
    </location>
</feature>
<feature type="chain" id="PRO_0000019534" description="Cobalamin trafficking protein CblD">
    <location>
        <begin position="39"/>
        <end position="296"/>
    </location>
</feature>
<feature type="modified residue" description="N6-acetyllysine" evidence="17">
    <location>
        <position position="203"/>
    </location>
</feature>
<feature type="sequence variant" id="VAR_090026" description="In MACD." evidence="2">
    <location>
        <begin position="54"/>
        <end position="296"/>
    </location>
</feature>
<feature type="sequence variant" id="VAR_090027" description="In MACD." evidence="2">
    <original>S</original>
    <variation>SLAEPLS</variation>
    <location>
        <position position="108"/>
    </location>
</feature>
<feature type="sequence variant" id="VAR_043844" description="In HMAD; impairs interaction with MMACHC; dbSNP:rs118204045." evidence="2 6 8">
    <original>T</original>
    <variation>N</variation>
    <location>
        <position position="182"/>
    </location>
</feature>
<feature type="sequence variant" id="VAR_043845" description="In MAHCD." evidence="2">
    <location>
        <begin position="204"/>
        <end position="232"/>
    </location>
</feature>
<feature type="sequence variant" id="VAR_043846" description="In HMAD; dbSNP:rs118204046." evidence="2">
    <original>Y</original>
    <variation>C</variation>
    <location>
        <position position="249"/>
    </location>
</feature>
<feature type="sequence variant" id="VAR_090028" description="In MAHCD." evidence="2">
    <location>
        <begin position="250"/>
        <end position="296"/>
    </location>
</feature>
<feature type="sequence variant" id="VAR_043847" description="In HMAD; decreases methylcobalamin levels and increases adenosylcobalamin levels; no effect on interaction with MMACHC; dbSNP:rs118204044." evidence="2 6 8">
    <original>L</original>
    <variation>P</variation>
    <location>
        <position position="259"/>
    </location>
</feature>
<feature type="mutagenesis site" description="Mildly decreases methylcobalamin levels and strongly increases adenosylcobalamin levels." evidence="6">
    <original>F</original>
    <variation>A</variation>
    <location>
        <position position="165"/>
    </location>
</feature>
<feature type="mutagenesis site" description="Decreases methylcobalamin levels. No effect on interaction with MMACHC." evidence="6 8">
    <original>M</original>
    <variation>A</variation>
    <location>
        <position position="186"/>
    </location>
</feature>
<feature type="mutagenesis site" description="Decreases methylcobalamin levels. Impairs interaction with MMACHC." evidence="6 8">
    <original>W</original>
    <variation>A</variation>
    <location>
        <position position="189"/>
    </location>
</feature>
<feature type="mutagenesis site" description="Decreases methylcobalamin levels, but increases adenosylcobalamin levels." evidence="6">
    <original>R</original>
    <variation>A</variation>
    <location>
        <position position="197"/>
    </location>
</feature>
<feature type="mutagenesis site" description="Decreases methylcobalamin levels and mildly increases adenosylcobalamin levels." evidence="6">
    <original>F</original>
    <variation>A</variation>
    <location>
        <position position="204"/>
    </location>
</feature>
<feature type="mutagenesis site" description="No effect on cobalamin levels." evidence="6">
    <original>C</original>
    <variation>A</variation>
    <location>
        <position position="212"/>
    </location>
</feature>
<feature type="mutagenesis site" description="Decreases methylcobalamin levels, but increases adenosylcobalamin levels. No effect on interaction with MMACHC." evidence="6 8">
    <original>D</original>
    <variation>A</variation>
    <location>
        <position position="226"/>
    </location>
</feature>
<feature type="mutagenesis site" description="Mildly decreases methylcobalamin levels and strongly increases adenosylcobalamin levels." evidence="6">
    <original>Y</original>
    <variation>A</variation>
    <location>
        <position position="237"/>
    </location>
</feature>
<feature type="mutagenesis site" description="Mildly decreases methylcobalamin levels and strongly increases adenosylcobalamin levels." evidence="6">
    <original>R</original>
    <variation>A</variation>
    <location>
        <position position="266"/>
    </location>
</feature>
<feature type="mutagenesis site" description="Decreases methylcobalamin levels." evidence="6">
    <original>W</original>
    <variation>A</variation>
    <location>
        <position position="270"/>
    </location>
</feature>
<feature type="mutagenesis site" description="Marginally decreases methylcobalamin levels and strongly increases adenosylcobalamin levels." evidence="6">
    <original>S</original>
    <variation>A</variation>
    <location>
        <position position="278"/>
    </location>
</feature>
<feature type="mutagenesis site" description="No effect on cobalamin levels." evidence="6">
    <original>F</original>
    <variation>A</variation>
    <location>
        <position position="280"/>
    </location>
</feature>
<feature type="sequence conflict" description="In Ref. 1; AAG43124." evidence="13" ref="1">
    <original>F</original>
    <variation>S</variation>
    <location>
        <position position="204"/>
    </location>
</feature>
<feature type="sequence conflict" description="In Ref. 1; AAG43124." evidence="13" ref="1">
    <original>I</original>
    <variation>N</variation>
    <location>
        <position position="211"/>
    </location>
</feature>
<feature type="helix" evidence="18">
    <location>
        <begin position="137"/>
        <end position="140"/>
    </location>
</feature>
<feature type="strand" evidence="18">
    <location>
        <begin position="146"/>
        <end position="152"/>
    </location>
</feature>
<feature type="helix" evidence="18">
    <location>
        <begin position="155"/>
        <end position="162"/>
    </location>
</feature>
<feature type="strand" evidence="18">
    <location>
        <begin position="174"/>
        <end position="181"/>
    </location>
</feature>
<feature type="helix" evidence="18">
    <location>
        <begin position="191"/>
        <end position="217"/>
    </location>
</feature>
<feature type="strand" evidence="18">
    <location>
        <begin position="222"/>
        <end position="225"/>
    </location>
</feature>
<feature type="turn" evidence="18">
    <location>
        <begin position="227"/>
        <end position="229"/>
    </location>
</feature>
<feature type="strand" evidence="18">
    <location>
        <begin position="231"/>
        <end position="235"/>
    </location>
</feature>
<feature type="helix" evidence="18">
    <location>
        <begin position="247"/>
        <end position="251"/>
    </location>
</feature>
<feature type="strand" evidence="18">
    <location>
        <begin position="255"/>
        <end position="258"/>
    </location>
</feature>
<feature type="strand" evidence="18">
    <location>
        <begin position="263"/>
        <end position="267"/>
    </location>
</feature>
<feature type="turn" evidence="18">
    <location>
        <begin position="268"/>
        <end position="270"/>
    </location>
</feature>
<feature type="strand" evidence="18">
    <location>
        <begin position="273"/>
        <end position="281"/>
    </location>
</feature>
<feature type="helix" evidence="18">
    <location>
        <begin position="288"/>
        <end position="293"/>
    </location>
</feature>
<reference key="1">
    <citation type="submission" date="1998-04" db="EMBL/GenBank/DDBJ databases">
        <authorList>
            <person name="Mao Y.M."/>
            <person name="Xie Y."/>
            <person name="Zheng Z.H."/>
            <person name="Gu S.H."/>
            <person name="Ying K."/>
            <person name="Lin Q."/>
            <person name="Dai J.L."/>
            <person name="Tang R."/>
            <person name="Dong H."/>
            <person name="Wu X.Z."/>
        </authorList>
    </citation>
    <scope>NUCLEOTIDE SEQUENCE [LARGE SCALE MRNA]</scope>
    <source>
        <tissue>Fetal brain</tissue>
    </source>
</reference>
<reference key="2">
    <citation type="submission" date="1999-02" db="EMBL/GenBank/DDBJ databases">
        <authorList>
            <person name="Mei G."/>
            <person name="Yu W."/>
            <person name="Gibbs R.A."/>
        </authorList>
    </citation>
    <scope>NUCLEOTIDE SEQUENCE [LARGE SCALE MRNA]</scope>
    <source>
        <tissue>Brain</tissue>
    </source>
</reference>
<reference key="3">
    <citation type="journal article" date="2000" name="Genome Res.">
        <title>Cloning and functional analysis of cDNAs with open reading frames for 300 previously undefined genes expressed in CD34+ hematopoietic stem/progenitor cells.</title>
        <authorList>
            <person name="Zhang Q.-H."/>
            <person name="Ye M."/>
            <person name="Wu X.-Y."/>
            <person name="Ren S.-X."/>
            <person name="Zhao M."/>
            <person name="Zhao C.-J."/>
            <person name="Fu G."/>
            <person name="Shen Y."/>
            <person name="Fan H.-Y."/>
            <person name="Lu G."/>
            <person name="Zhong M."/>
            <person name="Xu X.-R."/>
            <person name="Han Z.-G."/>
            <person name="Zhang J.-W."/>
            <person name="Tao J."/>
            <person name="Huang Q.-H."/>
            <person name="Zhou J."/>
            <person name="Hu G.-X."/>
            <person name="Gu J."/>
            <person name="Chen S.-J."/>
            <person name="Chen Z."/>
        </authorList>
    </citation>
    <scope>NUCLEOTIDE SEQUENCE [LARGE SCALE MRNA]</scope>
    <source>
        <tissue>Umbilical cord blood</tissue>
    </source>
</reference>
<reference key="4">
    <citation type="journal article" date="2004" name="Nat. Genet.">
        <title>Complete sequencing and characterization of 21,243 full-length human cDNAs.</title>
        <authorList>
            <person name="Ota T."/>
            <person name="Suzuki Y."/>
            <person name="Nishikawa T."/>
            <person name="Otsuki T."/>
            <person name="Sugiyama T."/>
            <person name="Irie R."/>
            <person name="Wakamatsu A."/>
            <person name="Hayashi K."/>
            <person name="Sato H."/>
            <person name="Nagai K."/>
            <person name="Kimura K."/>
            <person name="Makita H."/>
            <person name="Sekine M."/>
            <person name="Obayashi M."/>
            <person name="Nishi T."/>
            <person name="Shibahara T."/>
            <person name="Tanaka T."/>
            <person name="Ishii S."/>
            <person name="Yamamoto J."/>
            <person name="Saito K."/>
            <person name="Kawai Y."/>
            <person name="Isono Y."/>
            <person name="Nakamura Y."/>
            <person name="Nagahari K."/>
            <person name="Murakami K."/>
            <person name="Yasuda T."/>
            <person name="Iwayanagi T."/>
            <person name="Wagatsuma M."/>
            <person name="Shiratori A."/>
            <person name="Sudo H."/>
            <person name="Hosoiri T."/>
            <person name="Kaku Y."/>
            <person name="Kodaira H."/>
            <person name="Kondo H."/>
            <person name="Sugawara M."/>
            <person name="Takahashi M."/>
            <person name="Kanda K."/>
            <person name="Yokoi T."/>
            <person name="Furuya T."/>
            <person name="Kikkawa E."/>
            <person name="Omura Y."/>
            <person name="Abe K."/>
            <person name="Kamihara K."/>
            <person name="Katsuta N."/>
            <person name="Sato K."/>
            <person name="Tanikawa M."/>
            <person name="Yamazaki M."/>
            <person name="Ninomiya K."/>
            <person name="Ishibashi T."/>
            <person name="Yamashita H."/>
            <person name="Murakawa K."/>
            <person name="Fujimori K."/>
            <person name="Tanai H."/>
            <person name="Kimata M."/>
            <person name="Watanabe M."/>
            <person name="Hiraoka S."/>
            <person name="Chiba Y."/>
            <person name="Ishida S."/>
            <person name="Ono Y."/>
            <person name="Takiguchi S."/>
            <person name="Watanabe S."/>
            <person name="Yosida M."/>
            <person name="Hotuta T."/>
            <person name="Kusano J."/>
            <person name="Kanehori K."/>
            <person name="Takahashi-Fujii A."/>
            <person name="Hara H."/>
            <person name="Tanase T.-O."/>
            <person name="Nomura Y."/>
            <person name="Togiya S."/>
            <person name="Komai F."/>
            <person name="Hara R."/>
            <person name="Takeuchi K."/>
            <person name="Arita M."/>
            <person name="Imose N."/>
            <person name="Musashino K."/>
            <person name="Yuuki H."/>
            <person name="Oshima A."/>
            <person name="Sasaki N."/>
            <person name="Aotsuka S."/>
            <person name="Yoshikawa Y."/>
            <person name="Matsunawa H."/>
            <person name="Ichihara T."/>
            <person name="Shiohata N."/>
            <person name="Sano S."/>
            <person name="Moriya S."/>
            <person name="Momiyama H."/>
            <person name="Satoh N."/>
            <person name="Takami S."/>
            <person name="Terashima Y."/>
            <person name="Suzuki O."/>
            <person name="Nakagawa S."/>
            <person name="Senoh A."/>
            <person name="Mizoguchi H."/>
            <person name="Goto Y."/>
            <person name="Shimizu F."/>
            <person name="Wakebe H."/>
            <person name="Hishigaki H."/>
            <person name="Watanabe T."/>
            <person name="Sugiyama A."/>
            <person name="Takemoto M."/>
            <person name="Kawakami B."/>
            <person name="Yamazaki M."/>
            <person name="Watanabe K."/>
            <person name="Kumagai A."/>
            <person name="Itakura S."/>
            <person name="Fukuzumi Y."/>
            <person name="Fujimori Y."/>
            <person name="Komiyama M."/>
            <person name="Tashiro H."/>
            <person name="Tanigami A."/>
            <person name="Fujiwara T."/>
            <person name="Ono T."/>
            <person name="Yamada K."/>
            <person name="Fujii Y."/>
            <person name="Ozaki K."/>
            <person name="Hirao M."/>
            <person name="Ohmori Y."/>
            <person name="Kawabata A."/>
            <person name="Hikiji T."/>
            <person name="Kobatake N."/>
            <person name="Inagaki H."/>
            <person name="Ikema Y."/>
            <person name="Okamoto S."/>
            <person name="Okitani R."/>
            <person name="Kawakami T."/>
            <person name="Noguchi S."/>
            <person name="Itoh T."/>
            <person name="Shigeta K."/>
            <person name="Senba T."/>
            <person name="Matsumura K."/>
            <person name="Nakajima Y."/>
            <person name="Mizuno T."/>
            <person name="Morinaga M."/>
            <person name="Sasaki M."/>
            <person name="Togashi T."/>
            <person name="Oyama M."/>
            <person name="Hata H."/>
            <person name="Watanabe M."/>
            <person name="Komatsu T."/>
            <person name="Mizushima-Sugano J."/>
            <person name="Satoh T."/>
            <person name="Shirai Y."/>
            <person name="Takahashi Y."/>
            <person name="Nakagawa K."/>
            <person name="Okumura K."/>
            <person name="Nagase T."/>
            <person name="Nomura N."/>
            <person name="Kikuchi H."/>
            <person name="Masuho Y."/>
            <person name="Yamashita R."/>
            <person name="Nakai K."/>
            <person name="Yada T."/>
            <person name="Nakamura Y."/>
            <person name="Ohara O."/>
            <person name="Isogai T."/>
            <person name="Sugano S."/>
        </authorList>
    </citation>
    <scope>NUCLEOTIDE SEQUENCE [LARGE SCALE MRNA]</scope>
    <source>
        <tissue>Skeletal muscle</tissue>
    </source>
</reference>
<reference key="5">
    <citation type="journal article" date="2005" name="Nature">
        <title>Generation and annotation of the DNA sequences of human chromosomes 2 and 4.</title>
        <authorList>
            <person name="Hillier L.W."/>
            <person name="Graves T.A."/>
            <person name="Fulton R.S."/>
            <person name="Fulton L.A."/>
            <person name="Pepin K.H."/>
            <person name="Minx P."/>
            <person name="Wagner-McPherson C."/>
            <person name="Layman D."/>
            <person name="Wylie K."/>
            <person name="Sekhon M."/>
            <person name="Becker M.C."/>
            <person name="Fewell G.A."/>
            <person name="Delehaunty K.D."/>
            <person name="Miner T.L."/>
            <person name="Nash W.E."/>
            <person name="Kremitzki C."/>
            <person name="Oddy L."/>
            <person name="Du H."/>
            <person name="Sun H."/>
            <person name="Bradshaw-Cordum H."/>
            <person name="Ali J."/>
            <person name="Carter J."/>
            <person name="Cordes M."/>
            <person name="Harris A."/>
            <person name="Isak A."/>
            <person name="van Brunt A."/>
            <person name="Nguyen C."/>
            <person name="Du F."/>
            <person name="Courtney L."/>
            <person name="Kalicki J."/>
            <person name="Ozersky P."/>
            <person name="Abbott S."/>
            <person name="Armstrong J."/>
            <person name="Belter E.A."/>
            <person name="Caruso L."/>
            <person name="Cedroni M."/>
            <person name="Cotton M."/>
            <person name="Davidson T."/>
            <person name="Desai A."/>
            <person name="Elliott G."/>
            <person name="Erb T."/>
            <person name="Fronick C."/>
            <person name="Gaige T."/>
            <person name="Haakenson W."/>
            <person name="Haglund K."/>
            <person name="Holmes A."/>
            <person name="Harkins R."/>
            <person name="Kim K."/>
            <person name="Kruchowski S.S."/>
            <person name="Strong C.M."/>
            <person name="Grewal N."/>
            <person name="Goyea E."/>
            <person name="Hou S."/>
            <person name="Levy A."/>
            <person name="Martinka S."/>
            <person name="Mead K."/>
            <person name="McLellan M.D."/>
            <person name="Meyer R."/>
            <person name="Randall-Maher J."/>
            <person name="Tomlinson C."/>
            <person name="Dauphin-Kohlberg S."/>
            <person name="Kozlowicz-Reilly A."/>
            <person name="Shah N."/>
            <person name="Swearengen-Shahid S."/>
            <person name="Snider J."/>
            <person name="Strong J.T."/>
            <person name="Thompson J."/>
            <person name="Yoakum M."/>
            <person name="Leonard S."/>
            <person name="Pearman C."/>
            <person name="Trani L."/>
            <person name="Radionenko M."/>
            <person name="Waligorski J.E."/>
            <person name="Wang C."/>
            <person name="Rock S.M."/>
            <person name="Tin-Wollam A.-M."/>
            <person name="Maupin R."/>
            <person name="Latreille P."/>
            <person name="Wendl M.C."/>
            <person name="Yang S.-P."/>
            <person name="Pohl C."/>
            <person name="Wallis J.W."/>
            <person name="Spieth J."/>
            <person name="Bieri T.A."/>
            <person name="Berkowicz N."/>
            <person name="Nelson J.O."/>
            <person name="Osborne J."/>
            <person name="Ding L."/>
            <person name="Meyer R."/>
            <person name="Sabo A."/>
            <person name="Shotland Y."/>
            <person name="Sinha P."/>
            <person name="Wohldmann P.E."/>
            <person name="Cook L.L."/>
            <person name="Hickenbotham M.T."/>
            <person name="Eldred J."/>
            <person name="Williams D."/>
            <person name="Jones T.A."/>
            <person name="She X."/>
            <person name="Ciccarelli F.D."/>
            <person name="Izaurralde E."/>
            <person name="Taylor J."/>
            <person name="Schmutz J."/>
            <person name="Myers R.M."/>
            <person name="Cox D.R."/>
            <person name="Huang X."/>
            <person name="McPherson J.D."/>
            <person name="Mardis E.R."/>
            <person name="Clifton S.W."/>
            <person name="Warren W.C."/>
            <person name="Chinwalla A.T."/>
            <person name="Eddy S.R."/>
            <person name="Marra M.A."/>
            <person name="Ovcharenko I."/>
            <person name="Furey T.S."/>
            <person name="Miller W."/>
            <person name="Eichler E.E."/>
            <person name="Bork P."/>
            <person name="Suyama M."/>
            <person name="Torrents D."/>
            <person name="Waterston R.H."/>
            <person name="Wilson R.K."/>
        </authorList>
    </citation>
    <scope>NUCLEOTIDE SEQUENCE [LARGE SCALE GENOMIC DNA]</scope>
</reference>
<reference key="6">
    <citation type="submission" date="2005-09" db="EMBL/GenBank/DDBJ databases">
        <authorList>
            <person name="Mural R.J."/>
            <person name="Istrail S."/>
            <person name="Sutton G.G."/>
            <person name="Florea L."/>
            <person name="Halpern A.L."/>
            <person name="Mobarry C.M."/>
            <person name="Lippert R."/>
            <person name="Walenz B."/>
            <person name="Shatkay H."/>
            <person name="Dew I."/>
            <person name="Miller J.R."/>
            <person name="Flanigan M.J."/>
            <person name="Edwards N.J."/>
            <person name="Bolanos R."/>
            <person name="Fasulo D."/>
            <person name="Halldorsson B.V."/>
            <person name="Hannenhalli S."/>
            <person name="Turner R."/>
            <person name="Yooseph S."/>
            <person name="Lu F."/>
            <person name="Nusskern D.R."/>
            <person name="Shue B.C."/>
            <person name="Zheng X.H."/>
            <person name="Zhong F."/>
            <person name="Delcher A.L."/>
            <person name="Huson D.H."/>
            <person name="Kravitz S.A."/>
            <person name="Mouchard L."/>
            <person name="Reinert K."/>
            <person name="Remington K.A."/>
            <person name="Clark A.G."/>
            <person name="Waterman M.S."/>
            <person name="Eichler E.E."/>
            <person name="Adams M.D."/>
            <person name="Hunkapiller M.W."/>
            <person name="Myers E.W."/>
            <person name="Venter J.C."/>
        </authorList>
    </citation>
    <scope>NUCLEOTIDE SEQUENCE [LARGE SCALE GENOMIC DNA]</scope>
</reference>
<reference key="7">
    <citation type="journal article" date="2004" name="Genome Res.">
        <title>The status, quality, and expansion of the NIH full-length cDNA project: the Mammalian Gene Collection (MGC).</title>
        <authorList>
            <consortium name="The MGC Project Team"/>
        </authorList>
    </citation>
    <scope>NUCLEOTIDE SEQUENCE [LARGE SCALE MRNA]</scope>
    <source>
        <tissue>Brain</tissue>
        <tissue>Kidney</tissue>
        <tissue>Placenta</tissue>
        <tissue>Skeletal muscle</tissue>
    </source>
</reference>
<reference key="8">
    <citation type="journal article" date="2008" name="N. Engl. J. Med.">
        <title>Gene identification for the cblD defect of vitamin B12 metabolism.</title>
        <authorList>
            <person name="Coelho D."/>
            <person name="Suormala T."/>
            <person name="Stucki M."/>
            <person name="Lerner-Ellis J.P."/>
            <person name="Rosenblatt D.S."/>
            <person name="Newbold R.F."/>
            <person name="Baumgartner M.R."/>
            <person name="Fowler B."/>
        </authorList>
    </citation>
    <scope>FUNCTION</scope>
    <scope>TISSUE SPECIFICITY</scope>
    <scope>VARIANTS HMAD ASN-182; CYS-249 AND PRO-259</scope>
    <scope>VARIANTS MAHCD 204-PHE--ALA-232 DEL AND 250-ARG--ASN-296 DEL</scope>
    <scope>VARIANTS MACD 54-ARG--ASN-296 DEL AND LEU-ALA-GLU-PRO-LEU-SER-108 INS</scope>
    <scope>INVOLVEMENT IN HMAD</scope>
    <scope>INVOLVEMENT IN MAHCD</scope>
    <scope>INVOLVEMENT IN MACD</scope>
</reference>
<reference key="9">
    <citation type="journal article" date="2009" name="Science">
        <title>Lysine acetylation targets protein complexes and co-regulates major cellular functions.</title>
        <authorList>
            <person name="Choudhary C."/>
            <person name="Kumar C."/>
            <person name="Gnad F."/>
            <person name="Nielsen M.L."/>
            <person name="Rehman M."/>
            <person name="Walther T.C."/>
            <person name="Olsen J.V."/>
            <person name="Mann M."/>
        </authorList>
    </citation>
    <scope>ACETYLATION [LARGE SCALE ANALYSIS] AT LYS-203</scope>
    <scope>IDENTIFICATION BY MASS SPECTROMETRY [LARGE SCALE ANALYSIS]</scope>
</reference>
<reference key="10">
    <citation type="journal article" date="2011" name="Mol. Genet. Metab.">
        <title>Interaction between MMACHC and MMADHC, two human proteins participating in intracellular vitamin B(1)(2) metabolism.</title>
        <authorList>
            <person name="Plesa M."/>
            <person name="Kim J."/>
            <person name="Paquette S.G."/>
            <person name="Gagnon H."/>
            <person name="Ng-Thow-Hing C."/>
            <person name="Gibbs B.F."/>
            <person name="Hancock M.A."/>
            <person name="Rosenblatt D.S."/>
            <person name="Coulton J.W."/>
        </authorList>
    </citation>
    <scope>INTERACTION WITH MMACHC</scope>
</reference>
<reference key="11">
    <citation type="journal article" date="2013" name="Biochimie">
        <title>The C-terminal domain of CblD interacts with CblC and influences intracellular cobalamin partitioning.</title>
        <authorList>
            <person name="Gherasim C."/>
            <person name="Hannibal L."/>
            <person name="Rajagopalan D."/>
            <person name="Jacobsen D.W."/>
            <person name="Banerjee R."/>
        </authorList>
    </citation>
    <scope>FUNCTION</scope>
    <scope>INTERACTION WITH MMACHC</scope>
</reference>
<reference key="12">
    <citation type="journal article" date="2013" name="Mol. Genet. Metab.">
        <title>Subcellular location of MMACHC and MMADHC, two human proteins central to intracellular vitamin B(12) metabolism.</title>
        <authorList>
            <person name="Mah W."/>
            <person name="Deme J.C."/>
            <person name="Watkins D."/>
            <person name="Fung S."/>
            <person name="Janer A."/>
            <person name="Shoubridge E.A."/>
            <person name="Rosenblatt D.S."/>
            <person name="Coulton J.W."/>
        </authorList>
    </citation>
    <scope>SUBCELLULAR LOCATION</scope>
</reference>
<reference key="13">
    <citation type="journal article" date="2014" name="J. Inherit. Metab. Dis.">
        <title>Characterization of functional domains of the cblD (MMADHC) gene product.</title>
        <authorList>
            <person name="Jusufi J."/>
            <person name="Suormala T."/>
            <person name="Burda P."/>
            <person name="Fowler B."/>
            <person name="Froese D.S."/>
            <person name="Baumgartner M.R."/>
        </authorList>
    </citation>
    <scope>FUNCTION</scope>
    <scope>CHARACTERIZATION OF VARIANT HMAD PRO-259</scope>
    <scope>MUTAGENESIS OF PHE-165; MET-186; TRP-189; ARG-197; PHE-204; CYS-212; ASP-226; TYR-237; ARG-266; TRP-270; SER-278 AND PHE-280</scope>
</reference>
<reference key="14">
    <citation type="journal article" date="2015" name="J. Biol. Chem.">
        <title>Structural insights into the MMACHC-MMADHC protein complex involved in vitamin B12 trafficking.</title>
        <authorList>
            <person name="Froese D.S."/>
            <person name="Kopec J."/>
            <person name="Fitzpatrick F."/>
            <person name="Schuller M."/>
            <person name="McCorvie T.J."/>
            <person name="Chalk R."/>
            <person name="Plessl T."/>
            <person name="Fettelschoss V."/>
            <person name="Fowler B."/>
            <person name="Baumgartner M.R."/>
            <person name="Yue W.W."/>
        </authorList>
    </citation>
    <scope>INTERACTION WITH MMACHC</scope>
    <scope>CHARACTERIZATION OF VARIANTS HMAD ASN-182 AND PRO-259</scope>
    <scope>MUTAGENESIS OF TRP-189 AND ASP-226</scope>
</reference>
<reference key="15">
    <citation type="journal article" date="2017" name="Biochim. Biophys. Acta">
        <title>Methionine synthase and methionine synthase reductase interact with MMACHC and with MMADHC.</title>
        <authorList>
            <person name="Bassila C."/>
            <person name="Ghemrawi R."/>
            <person name="Flayac J."/>
            <person name="Froese D.S."/>
            <person name="Baumgartner M.R."/>
            <person name="Gueant J.L."/>
            <person name="Coelho D."/>
        </authorList>
    </citation>
    <scope>FUNCTION</scope>
    <scope>INTERACTION WITH MMADHC; MTR AND MTRR</scope>
</reference>
<reference evidence="15 16" key="16">
    <citation type="journal article" date="2015" name="J. Biol. Chem.">
        <title>Structure of human B12 trafficking protein CblD reveals molecular mimicry and identifies a new subfamily of nitro-FMN reductases.</title>
        <authorList>
            <person name="Yamada K."/>
            <person name="Gherasim C."/>
            <person name="Banerjee R."/>
            <person name="Koutmos M."/>
        </authorList>
    </citation>
    <scope>X-RAY CRYSTALLOGRAPHY (1.90 ANGSTROMS) OF 108-296</scope>
    <scope>FUNCTION</scope>
</reference>
<sequence>MANVLCNRARLVSYLPGFCSLVKRVVNPKAFSTAGSSGSDESHVAAAPPDICSRTVWPDETMGPFGPQDQRFQLPGNIGFDCHLNGTASQKKSLVHKTLPDVLAEPLSSERHEFVMAQYVNEFQGNDAPVEQEINSAETYFESARVECAIQTCPELLRKDFESLFPEVANGKLMILTVTQKTKNDMTVWSEEVEIEREVLLEKFINGAKEICYALRAEGYWADFIDPSSGLAFFGPYTNNTLFETDERYRHLGFSVDDLGCCKVIRHSLWGTHVVVGSIFTNATPDSHIMKKLSGN</sequence>
<evidence type="ECO:0000255" key="1"/>
<evidence type="ECO:0000269" key="2">
    <source>
    </source>
</evidence>
<evidence type="ECO:0000269" key="3">
    <source>
    </source>
</evidence>
<evidence type="ECO:0000269" key="4">
    <source>
    </source>
</evidence>
<evidence type="ECO:0000269" key="5">
    <source>
    </source>
</evidence>
<evidence type="ECO:0000269" key="6">
    <source>
    </source>
</evidence>
<evidence type="ECO:0000269" key="7">
    <source>
    </source>
</evidence>
<evidence type="ECO:0000269" key="8">
    <source>
    </source>
</evidence>
<evidence type="ECO:0000269" key="9">
    <source>
    </source>
</evidence>
<evidence type="ECO:0000303" key="10">
    <source>
    </source>
</evidence>
<evidence type="ECO:0000303" key="11">
    <source>
    </source>
</evidence>
<evidence type="ECO:0000303" key="12">
    <source>
    </source>
</evidence>
<evidence type="ECO:0000305" key="13"/>
<evidence type="ECO:0000312" key="14">
    <source>
        <dbReference type="HGNC" id="HGNC:25221"/>
    </source>
</evidence>
<evidence type="ECO:0007744" key="15">
    <source>
        <dbReference type="PDB" id="5CUZ"/>
    </source>
</evidence>
<evidence type="ECO:0007744" key="16">
    <source>
        <dbReference type="PDB" id="5CV0"/>
    </source>
</evidence>
<evidence type="ECO:0007744" key="17">
    <source>
    </source>
</evidence>
<evidence type="ECO:0007829" key="18">
    <source>
        <dbReference type="PDB" id="5CV0"/>
    </source>
</evidence>
<protein>
    <recommendedName>
        <fullName evidence="12">Cobalamin trafficking protein CblD</fullName>
    </recommendedName>
    <alternativeName>
        <fullName evidence="10 11 12">CblD</fullName>
    </alternativeName>
    <alternativeName>
        <fullName>Methylmalonic aciduria and homocystinuria type D protein, mitochondrial</fullName>
    </alternativeName>
</protein>
<gene>
    <name evidence="14" type="primary">MMADHC</name>
    <name type="synonym">C2orf25</name>
    <name type="synonym">CL25022</name>
    <name type="ORF">HSPC161</name>
    <name type="ORF">My011</name>
</gene>
<comment type="function">
    <text evidence="2 5 6 7 9">Involved in cobalamin metabolism and trafficking (PubMed:18385497, PubMed:23415655, PubMed:24722857, PubMed:26364851). Plays a role in regulating the biosynthesis and the proportion of two coenzymes, methylcob(III)alamin (MeCbl) and 5'-deoxyadenosylcobalamin (AdoCbl) (PubMed:18385497, PubMed:23415655, PubMed:24722857). Promotes oxidation of cob(II)alamin bound to MMACHC (PubMed:26364851). The processing of cobalamin in the cytosol occurs in a multiprotein complex composed of at least MMACHC, MMADHC, MTRR (methionine synthase reductase) and MTR (methionine synthase) which may contribute to shuttle safely and efficiently cobalamin towards MTR in order to produce methionine (PubMed:27771510).</text>
</comment>
<comment type="subunit">
    <text evidence="3 5 8 9">Heterodimer with MMACHC. Forms a multiprotein complex with MMACHC, MTR and MTRR (PubMed:27771510).</text>
</comment>
<comment type="interaction">
    <interactant intactId="EBI-11111575">
        <id>Q9H3L0</id>
    </interactant>
    <interactant intactId="EBI-739784">
        <id>Q9BW66</id>
        <label>CINP</label>
    </interactant>
    <organismsDiffer>false</organismsDiffer>
    <experiments>3</experiments>
</comment>
<comment type="interaction">
    <interactant intactId="EBI-11111575">
        <id>Q9H3L0</id>
    </interactant>
    <interactant intactId="EBI-10192698">
        <id>Q02930-3</id>
        <label>CREB5</label>
    </interactant>
    <organismsDiffer>false</organismsDiffer>
    <experiments>5</experiments>
</comment>
<comment type="interaction">
    <interactant intactId="EBI-11111575">
        <id>Q9H3L0</id>
    </interactant>
    <interactant intactId="EBI-17236143">
        <id>Q12837</id>
        <label>POU4F2</label>
    </interactant>
    <organismsDiffer>false</organismsDiffer>
    <experiments>3</experiments>
</comment>
<comment type="interaction">
    <interactant intactId="EBI-11111575">
        <id>Q9H3L0</id>
    </interactant>
    <interactant intactId="EBI-3258000">
        <id>Q9P0N9</id>
        <label>TBC1D7</label>
    </interactant>
    <organismsDiffer>false</organismsDiffer>
    <experiments>3</experiments>
</comment>
<comment type="subcellular location">
    <subcellularLocation>
        <location evidence="4">Cytoplasm</location>
    </subcellularLocation>
    <subcellularLocation>
        <location evidence="4">Mitochondrion</location>
    </subcellularLocation>
</comment>
<comment type="tissue specificity">
    <text evidence="2">Widely expressed at high levels.</text>
</comment>
<comment type="disease" evidence="2">
    <disease id="DI-00745">
        <name>Methylmalonic aciduria and homocystinuria, cblD type</name>
        <acronym>MAHCD</acronym>
        <description>An autosomal recessive disorder of cobalamin metabolism characterized by decreased levels of the coenzymes adenosylcobalamin (AdoCbl) and methylcobalamin (MeCbl). Clinical features include developmental delay, hyotonia, intellectual disability, seizures, and megaloblastic anemia. Laboratory studies show methylmalonic aciduria and homocystinuria.</description>
        <dbReference type="MIM" id="277410"/>
    </disease>
    <text>The disease is caused by variants affecting the gene represented in this entry.</text>
</comment>
<comment type="disease" evidence="2 6 8">
    <disease id="DI-06944">
        <name>Homocystinuria-megaloblastic anemia, cblD type</name>
        <acronym>HMAD</acronym>
        <description>An autosomal recessive inborn error of metabolism resulting from defects in the cobalamin-dependent pathway that converts homocysteine to methionine. HMAD appears in infancy or early childhood and is characterized by delayed psychomotor development, dystonia or spastic ataxia, poor speech, megaloblastic anemia, homocystinuria, and hypomethioninemia. Additional features may include nystagmus, poor eye contact, hypotonia, and seizures. Brain imaging shows cerebral or cerebellar atrophy.</description>
        <dbReference type="MIM" id="620952"/>
    </disease>
    <text>The disease is caused by variants affecting the gene represented in this entry.</text>
</comment>
<comment type="disease" evidence="2">
    <disease id="DI-06945">
        <name>Methylmalonic aciduria, cblD type</name>
        <acronym>MACD</acronym>
        <description>A form of methylmalonic aciduria, an inborn error of methylmalonate and cobalamin metabolism due to defective synthesis of adenosylcobalamin. MACD is an autosomal recessive form characterized by severe clinical features including respiratory distress syndrome, intracranial hemorrhage, seizures, and ketotic coma. Laboratory studies show isolated methylmalonic aciduria without homocystinuria.</description>
        <dbReference type="MIM" id="620953"/>
    </disease>
    <text>The disease is caused by variants affecting the gene represented in this entry.</text>
</comment>
<comment type="sequence caution" evidence="13">
    <conflict type="frameshift">
        <sequence resource="EMBL-CDS" id="AAG43124"/>
    </conflict>
</comment>
<organism>
    <name type="scientific">Homo sapiens</name>
    <name type="common">Human</name>
    <dbReference type="NCBI Taxonomy" id="9606"/>
    <lineage>
        <taxon>Eukaryota</taxon>
        <taxon>Metazoa</taxon>
        <taxon>Chordata</taxon>
        <taxon>Craniata</taxon>
        <taxon>Vertebrata</taxon>
        <taxon>Euteleostomi</taxon>
        <taxon>Mammalia</taxon>
        <taxon>Eutheria</taxon>
        <taxon>Euarchontoglires</taxon>
        <taxon>Primates</taxon>
        <taxon>Haplorrhini</taxon>
        <taxon>Catarrhini</taxon>
        <taxon>Hominidae</taxon>
        <taxon>Homo</taxon>
    </lineage>
</organism>
<accession>Q9H3L0</accession>
<accession>B2R895</accession>
<accession>D3DP91</accession>
<accession>O95891</accession>
<proteinExistence type="evidence at protein level"/>
<name>MMAD_HUMAN</name>
<dbReference type="EMBL" id="AF060224">
    <property type="protein sequence ID" value="AAG43124.1"/>
    <property type="status" value="ALT_FRAME"/>
    <property type="molecule type" value="mRNA"/>
</dbReference>
<dbReference type="EMBL" id="AF131802">
    <property type="protein sequence ID" value="AAD20048.1"/>
    <property type="molecule type" value="mRNA"/>
</dbReference>
<dbReference type="EMBL" id="AF161510">
    <property type="protein sequence ID" value="AAF29125.1"/>
    <property type="molecule type" value="mRNA"/>
</dbReference>
<dbReference type="EMBL" id="AK313284">
    <property type="protein sequence ID" value="BAG36092.1"/>
    <property type="molecule type" value="mRNA"/>
</dbReference>
<dbReference type="EMBL" id="AC110782">
    <property type="protein sequence ID" value="AAY14891.1"/>
    <property type="molecule type" value="Genomic_DNA"/>
</dbReference>
<dbReference type="EMBL" id="CH471058">
    <property type="protein sequence ID" value="EAX11533.1"/>
    <property type="molecule type" value="Genomic_DNA"/>
</dbReference>
<dbReference type="EMBL" id="CH471058">
    <property type="protein sequence ID" value="EAX11534.1"/>
    <property type="molecule type" value="Genomic_DNA"/>
</dbReference>
<dbReference type="EMBL" id="CH471058">
    <property type="protein sequence ID" value="EAX11535.1"/>
    <property type="molecule type" value="Genomic_DNA"/>
</dbReference>
<dbReference type="EMBL" id="CH471058">
    <property type="protein sequence ID" value="EAX11537.1"/>
    <property type="molecule type" value="Genomic_DNA"/>
</dbReference>
<dbReference type="EMBL" id="BC000932">
    <property type="protein sequence ID" value="AAH00932.1"/>
    <property type="molecule type" value="mRNA"/>
</dbReference>
<dbReference type="EMBL" id="BC010894">
    <property type="protein sequence ID" value="AAH10894.1"/>
    <property type="molecule type" value="mRNA"/>
</dbReference>
<dbReference type="EMBL" id="BC022859">
    <property type="protein sequence ID" value="AAH22859.1"/>
    <property type="molecule type" value="mRNA"/>
</dbReference>
<dbReference type="EMBL" id="BC023995">
    <property type="protein sequence ID" value="AAH23995.1"/>
    <property type="molecule type" value="mRNA"/>
</dbReference>
<dbReference type="CCDS" id="CCDS2189.1"/>
<dbReference type="RefSeq" id="NP_056517.1">
    <property type="nucleotide sequence ID" value="NM_015702.3"/>
</dbReference>
<dbReference type="PDB" id="5CUZ">
    <property type="method" value="X-ray"/>
    <property type="resolution" value="2.31 A"/>
    <property type="chains" value="A=108-296"/>
</dbReference>
<dbReference type="PDB" id="5CV0">
    <property type="method" value="X-ray"/>
    <property type="resolution" value="1.90 A"/>
    <property type="chains" value="A/B=108-296"/>
</dbReference>
<dbReference type="PDB" id="6X8Z">
    <property type="method" value="X-ray"/>
    <property type="resolution" value="2.50 A"/>
    <property type="chains" value="A/B=108-296"/>
</dbReference>
<dbReference type="PDBsum" id="5CUZ"/>
<dbReference type="PDBsum" id="5CV0"/>
<dbReference type="PDBsum" id="6X8Z"/>
<dbReference type="SMR" id="Q9H3L0"/>
<dbReference type="BioGRID" id="118097">
    <property type="interactions" value="36"/>
</dbReference>
<dbReference type="FunCoup" id="Q9H3L0">
    <property type="interactions" value="1779"/>
</dbReference>
<dbReference type="IntAct" id="Q9H3L0">
    <property type="interactions" value="31"/>
</dbReference>
<dbReference type="STRING" id="9606.ENSP00000389060"/>
<dbReference type="ChEMBL" id="CHEMBL4879517"/>
<dbReference type="GlyGen" id="Q9H3L0">
    <property type="glycosylation" value="1 site, 1 N-linked glycan (1 site)"/>
</dbReference>
<dbReference type="iPTMnet" id="Q9H3L0"/>
<dbReference type="PhosphoSitePlus" id="Q9H3L0"/>
<dbReference type="BioMuta" id="MMADHC"/>
<dbReference type="DMDM" id="68565296"/>
<dbReference type="jPOST" id="Q9H3L0"/>
<dbReference type="MassIVE" id="Q9H3L0"/>
<dbReference type="PaxDb" id="9606-ENSP00000389060"/>
<dbReference type="PeptideAtlas" id="Q9H3L0"/>
<dbReference type="ProteomicsDB" id="80728"/>
<dbReference type="Pumba" id="Q9H3L0"/>
<dbReference type="Antibodypedia" id="33644">
    <property type="antibodies" value="209 antibodies from 21 providers"/>
</dbReference>
<dbReference type="DNASU" id="27249"/>
<dbReference type="Ensembl" id="ENST00000303319.10">
    <property type="protein sequence ID" value="ENSP00000301920.5"/>
    <property type="gene ID" value="ENSG00000168288.13"/>
</dbReference>
<dbReference type="Ensembl" id="ENST00000428879.5">
    <property type="protein sequence ID" value="ENSP00000389060.1"/>
    <property type="gene ID" value="ENSG00000168288.13"/>
</dbReference>
<dbReference type="GeneID" id="27249"/>
<dbReference type="KEGG" id="hsa:27249"/>
<dbReference type="MANE-Select" id="ENST00000303319.10">
    <property type="protein sequence ID" value="ENSP00000301920.5"/>
    <property type="RefSeq nucleotide sequence ID" value="NM_015702.3"/>
    <property type="RefSeq protein sequence ID" value="NP_056517.1"/>
</dbReference>
<dbReference type="UCSC" id="uc002txc.4">
    <property type="organism name" value="human"/>
</dbReference>
<dbReference type="AGR" id="HGNC:25221"/>
<dbReference type="CTD" id="27249"/>
<dbReference type="DisGeNET" id="27249"/>
<dbReference type="GeneCards" id="MMADHC"/>
<dbReference type="GeneReviews" id="MMADHC"/>
<dbReference type="HGNC" id="HGNC:25221">
    <property type="gene designation" value="MMADHC"/>
</dbReference>
<dbReference type="HPA" id="ENSG00000168288">
    <property type="expression patterns" value="Low tissue specificity"/>
</dbReference>
<dbReference type="MalaCards" id="MMADHC"/>
<dbReference type="MIM" id="277410">
    <property type="type" value="phenotype"/>
</dbReference>
<dbReference type="MIM" id="611935">
    <property type="type" value="gene"/>
</dbReference>
<dbReference type="MIM" id="620952">
    <property type="type" value="phenotype"/>
</dbReference>
<dbReference type="MIM" id="620953">
    <property type="type" value="phenotype"/>
</dbReference>
<dbReference type="neXtProt" id="NX_Q9H3L0"/>
<dbReference type="OpenTargets" id="ENSG00000168288"/>
<dbReference type="Orphanet" id="308380">
    <property type="disease" value="Methylcobalamin deficiency type cblDv1"/>
</dbReference>
<dbReference type="Orphanet" id="79283">
    <property type="disease" value="Methylmalonic acidemia with homocystinuria, type cblD"/>
</dbReference>
<dbReference type="Orphanet" id="308442">
    <property type="disease" value="Vitamin B12-responsive methylmalonic acidemia, type cblDv2"/>
</dbReference>
<dbReference type="PharmGKB" id="PA164723053"/>
<dbReference type="VEuPathDB" id="HostDB:ENSG00000168288"/>
<dbReference type="eggNOG" id="KOG3994">
    <property type="taxonomic scope" value="Eukaryota"/>
</dbReference>
<dbReference type="GeneTree" id="ENSGT00390000015050"/>
<dbReference type="HOGENOM" id="CLU_066240_0_0_1"/>
<dbReference type="InParanoid" id="Q9H3L0"/>
<dbReference type="OrthoDB" id="10263782at2759"/>
<dbReference type="PAN-GO" id="Q9H3L0">
    <property type="GO annotations" value="1 GO annotation based on evolutionary models"/>
</dbReference>
<dbReference type="PhylomeDB" id="Q9H3L0"/>
<dbReference type="TreeFam" id="TF314208"/>
<dbReference type="BioCyc" id="MetaCyc:ENSG00000168288-MONOMER"/>
<dbReference type="PathwayCommons" id="Q9H3L0"/>
<dbReference type="Reactome" id="R-HSA-3359473">
    <property type="pathway name" value="Defective MMADHC causes MMAHCD"/>
</dbReference>
<dbReference type="Reactome" id="R-HSA-9759218">
    <property type="pathway name" value="Cobalamin (Cbl) metabolism"/>
</dbReference>
<dbReference type="SignaLink" id="Q9H3L0"/>
<dbReference type="BioGRID-ORCS" id="27249">
    <property type="hits" value="16 hits in 1153 CRISPR screens"/>
</dbReference>
<dbReference type="ChiTaRS" id="MMADHC">
    <property type="organism name" value="human"/>
</dbReference>
<dbReference type="EvolutionaryTrace" id="Q9H3L0"/>
<dbReference type="GeneWiki" id="MMADHC"/>
<dbReference type="GenomeRNAi" id="27249"/>
<dbReference type="Pharos" id="Q9H3L0">
    <property type="development level" value="Tbio"/>
</dbReference>
<dbReference type="PRO" id="PR:Q9H3L0"/>
<dbReference type="Proteomes" id="UP000005640">
    <property type="component" value="Chromosome 2"/>
</dbReference>
<dbReference type="RNAct" id="Q9H3L0">
    <property type="molecule type" value="protein"/>
</dbReference>
<dbReference type="Bgee" id="ENSG00000168288">
    <property type="expression patterns" value="Expressed in palpebral conjunctiva and 209 other cell types or tissues"/>
</dbReference>
<dbReference type="ExpressionAtlas" id="Q9H3L0">
    <property type="expression patterns" value="baseline and differential"/>
</dbReference>
<dbReference type="GO" id="GO:0005737">
    <property type="term" value="C:cytoplasm"/>
    <property type="evidence" value="ECO:0000314"/>
    <property type="project" value="UniProtKB"/>
</dbReference>
<dbReference type="GO" id="GO:0005829">
    <property type="term" value="C:cytosol"/>
    <property type="evidence" value="ECO:0000314"/>
    <property type="project" value="MGI"/>
</dbReference>
<dbReference type="GO" id="GO:0005739">
    <property type="term" value="C:mitochondrion"/>
    <property type="evidence" value="ECO:0000314"/>
    <property type="project" value="UniProtKB"/>
</dbReference>
<dbReference type="GO" id="GO:0140104">
    <property type="term" value="F:molecular carrier activity"/>
    <property type="evidence" value="ECO:0000269"/>
    <property type="project" value="Reactome"/>
</dbReference>
<dbReference type="GO" id="GO:0009235">
    <property type="term" value="P:cobalamin metabolic process"/>
    <property type="evidence" value="ECO:0000314"/>
    <property type="project" value="UniProtKB"/>
</dbReference>
<dbReference type="InterPro" id="IPR019362">
    <property type="entry name" value="MMADHC"/>
</dbReference>
<dbReference type="PANTHER" id="PTHR13192:SF3">
    <property type="entry name" value="COBALAMIN TRAFFICKING PROTEIN CBLD"/>
    <property type="match status" value="1"/>
</dbReference>
<dbReference type="PANTHER" id="PTHR13192">
    <property type="entry name" value="MY011 PROTEIN"/>
    <property type="match status" value="1"/>
</dbReference>
<dbReference type="Pfam" id="PF10229">
    <property type="entry name" value="MMADHC"/>
    <property type="match status" value="1"/>
</dbReference>
<keyword id="KW-0002">3D-structure</keyword>
<keyword id="KW-0007">Acetylation</keyword>
<keyword id="KW-0963">Cytoplasm</keyword>
<keyword id="KW-0225">Disease variant</keyword>
<keyword id="KW-0496">Mitochondrion</keyword>
<keyword id="KW-1267">Proteomics identification</keyword>
<keyword id="KW-1185">Reference proteome</keyword>
<keyword id="KW-0809">Transit peptide</keyword>